<protein>
    <recommendedName>
        <fullName>Probable thionin-2.4</fullName>
    </recommendedName>
</protein>
<gene>
    <name type="ordered locus">At1g66100</name>
    <name type="ORF">F15E12.20</name>
</gene>
<feature type="signal peptide" evidence="2">
    <location>
        <begin position="1"/>
        <end position="24"/>
    </location>
</feature>
<feature type="chain" id="PRO_0000034145" description="Probable thionin-2.4">
    <location>
        <begin position="25"/>
        <end position="70"/>
    </location>
</feature>
<feature type="propeptide" id="PRO_0000459424" description="Acidic domain" evidence="3">
    <location>
        <begin position="71"/>
        <end position="134"/>
    </location>
</feature>
<feature type="disulfide bond" evidence="1">
    <location>
        <begin position="27"/>
        <end position="64"/>
    </location>
</feature>
<feature type="disulfide bond" evidence="1">
    <location>
        <begin position="28"/>
        <end position="56"/>
    </location>
</feature>
<feature type="disulfide bond" evidence="1">
    <location>
        <begin position="40"/>
        <end position="50"/>
    </location>
</feature>
<name>THN24_ARATH</name>
<evidence type="ECO:0000250" key="1">
    <source>
        <dbReference type="UniProtKB" id="P08943"/>
    </source>
</evidence>
<evidence type="ECO:0000255" key="2"/>
<evidence type="ECO:0000305" key="3"/>
<proteinExistence type="evidence at transcript level"/>
<keyword id="KW-1015">Disulfide bond</keyword>
<keyword id="KW-0611">Plant defense</keyword>
<keyword id="KW-1185">Reference proteome</keyword>
<keyword id="KW-0964">Secreted</keyword>
<keyword id="KW-0732">Signal</keyword>
<keyword id="KW-0800">Toxin</keyword>
<organism>
    <name type="scientific">Arabidopsis thaliana</name>
    <name type="common">Mouse-ear cress</name>
    <dbReference type="NCBI Taxonomy" id="3702"/>
    <lineage>
        <taxon>Eukaryota</taxon>
        <taxon>Viridiplantae</taxon>
        <taxon>Streptophyta</taxon>
        <taxon>Embryophyta</taxon>
        <taxon>Tracheophyta</taxon>
        <taxon>Spermatophyta</taxon>
        <taxon>Magnoliopsida</taxon>
        <taxon>eudicotyledons</taxon>
        <taxon>Gunneridae</taxon>
        <taxon>Pentapetalae</taxon>
        <taxon>rosids</taxon>
        <taxon>malvids</taxon>
        <taxon>Brassicales</taxon>
        <taxon>Brassicaceae</taxon>
        <taxon>Camelineae</taxon>
        <taxon>Arabidopsis</taxon>
    </lineage>
</organism>
<sequence>MEGKTLIVSVLIMSLFMAQNQVDANICCPSIQARTFYNACLFAVGSPSSCIRNSSCLDISESTCPRGYTNDILENTGDAVTEYCKLGCVSSVCGALTILQNSDASEIVNGEVEKCTMACSTVCTKGSMNAVENA</sequence>
<comment type="function">
    <text>Thionins are small plant proteins which are toxic to animal cells. They seem to exert their toxic effect at the level of the cell membrane. Their precise function is not known.</text>
</comment>
<comment type="subcellular location">
    <subcellularLocation>
        <location evidence="3">Secreted</location>
    </subcellularLocation>
</comment>
<comment type="similarity">
    <text evidence="3">Belongs to the plant thionin (TC 1.C.44) family.</text>
</comment>
<reference key="1">
    <citation type="journal article" date="2000" name="Nature">
        <title>Sequence and analysis of chromosome 1 of the plant Arabidopsis thaliana.</title>
        <authorList>
            <person name="Theologis A."/>
            <person name="Ecker J.R."/>
            <person name="Palm C.J."/>
            <person name="Federspiel N.A."/>
            <person name="Kaul S."/>
            <person name="White O."/>
            <person name="Alonso J."/>
            <person name="Altafi H."/>
            <person name="Araujo R."/>
            <person name="Bowman C.L."/>
            <person name="Brooks S.Y."/>
            <person name="Buehler E."/>
            <person name="Chan A."/>
            <person name="Chao Q."/>
            <person name="Chen H."/>
            <person name="Cheuk R.F."/>
            <person name="Chin C.W."/>
            <person name="Chung M.K."/>
            <person name="Conn L."/>
            <person name="Conway A.B."/>
            <person name="Conway A.R."/>
            <person name="Creasy T.H."/>
            <person name="Dewar K."/>
            <person name="Dunn P."/>
            <person name="Etgu P."/>
            <person name="Feldblyum T.V."/>
            <person name="Feng J.-D."/>
            <person name="Fong B."/>
            <person name="Fujii C.Y."/>
            <person name="Gill J.E."/>
            <person name="Goldsmith A.D."/>
            <person name="Haas B."/>
            <person name="Hansen N.F."/>
            <person name="Hughes B."/>
            <person name="Huizar L."/>
            <person name="Hunter J.L."/>
            <person name="Jenkins J."/>
            <person name="Johnson-Hopson C."/>
            <person name="Khan S."/>
            <person name="Khaykin E."/>
            <person name="Kim C.J."/>
            <person name="Koo H.L."/>
            <person name="Kremenetskaia I."/>
            <person name="Kurtz D.B."/>
            <person name="Kwan A."/>
            <person name="Lam B."/>
            <person name="Langin-Hooper S."/>
            <person name="Lee A."/>
            <person name="Lee J.M."/>
            <person name="Lenz C.A."/>
            <person name="Li J.H."/>
            <person name="Li Y.-P."/>
            <person name="Lin X."/>
            <person name="Liu S.X."/>
            <person name="Liu Z.A."/>
            <person name="Luros J.S."/>
            <person name="Maiti R."/>
            <person name="Marziali A."/>
            <person name="Militscher J."/>
            <person name="Miranda M."/>
            <person name="Nguyen M."/>
            <person name="Nierman W.C."/>
            <person name="Osborne B.I."/>
            <person name="Pai G."/>
            <person name="Peterson J."/>
            <person name="Pham P.K."/>
            <person name="Rizzo M."/>
            <person name="Rooney T."/>
            <person name="Rowley D."/>
            <person name="Sakano H."/>
            <person name="Salzberg S.L."/>
            <person name="Schwartz J.R."/>
            <person name="Shinn P."/>
            <person name="Southwick A.M."/>
            <person name="Sun H."/>
            <person name="Tallon L.J."/>
            <person name="Tambunga G."/>
            <person name="Toriumi M.J."/>
            <person name="Town C.D."/>
            <person name="Utterback T."/>
            <person name="Van Aken S."/>
            <person name="Vaysberg M."/>
            <person name="Vysotskaia V.S."/>
            <person name="Walker M."/>
            <person name="Wu D."/>
            <person name="Yu G."/>
            <person name="Fraser C.M."/>
            <person name="Venter J.C."/>
            <person name="Davis R.W."/>
        </authorList>
    </citation>
    <scope>NUCLEOTIDE SEQUENCE [LARGE SCALE GENOMIC DNA]</scope>
    <source>
        <strain>cv. Columbia</strain>
    </source>
</reference>
<reference key="2">
    <citation type="journal article" date="2017" name="Plant J.">
        <title>Araport11: a complete reannotation of the Arabidopsis thaliana reference genome.</title>
        <authorList>
            <person name="Cheng C.Y."/>
            <person name="Krishnakumar V."/>
            <person name="Chan A.P."/>
            <person name="Thibaud-Nissen F."/>
            <person name="Schobel S."/>
            <person name="Town C.D."/>
        </authorList>
    </citation>
    <scope>GENOME REANNOTATION</scope>
    <source>
        <strain>cv. Columbia</strain>
    </source>
</reference>
<reference key="3">
    <citation type="journal article" date="2003" name="Science">
        <title>Empirical analysis of transcriptional activity in the Arabidopsis genome.</title>
        <authorList>
            <person name="Yamada K."/>
            <person name="Lim J."/>
            <person name="Dale J.M."/>
            <person name="Chen H."/>
            <person name="Shinn P."/>
            <person name="Palm C.J."/>
            <person name="Southwick A.M."/>
            <person name="Wu H.C."/>
            <person name="Kim C.J."/>
            <person name="Nguyen M."/>
            <person name="Pham P.K."/>
            <person name="Cheuk R.F."/>
            <person name="Karlin-Newmann G."/>
            <person name="Liu S.X."/>
            <person name="Lam B."/>
            <person name="Sakano H."/>
            <person name="Wu T."/>
            <person name="Yu G."/>
            <person name="Miranda M."/>
            <person name="Quach H.L."/>
            <person name="Tripp M."/>
            <person name="Chang C.H."/>
            <person name="Lee J.M."/>
            <person name="Toriumi M.J."/>
            <person name="Chan M.M."/>
            <person name="Tang C.C."/>
            <person name="Onodera C.S."/>
            <person name="Deng J.M."/>
            <person name="Akiyama K."/>
            <person name="Ansari Y."/>
            <person name="Arakawa T."/>
            <person name="Banh J."/>
            <person name="Banno F."/>
            <person name="Bowser L."/>
            <person name="Brooks S.Y."/>
            <person name="Carninci P."/>
            <person name="Chao Q."/>
            <person name="Choy N."/>
            <person name="Enju A."/>
            <person name="Goldsmith A.D."/>
            <person name="Gurjal M."/>
            <person name="Hansen N.F."/>
            <person name="Hayashizaki Y."/>
            <person name="Johnson-Hopson C."/>
            <person name="Hsuan V.W."/>
            <person name="Iida K."/>
            <person name="Karnes M."/>
            <person name="Khan S."/>
            <person name="Koesema E."/>
            <person name="Ishida J."/>
            <person name="Jiang P.X."/>
            <person name="Jones T."/>
            <person name="Kawai J."/>
            <person name="Kamiya A."/>
            <person name="Meyers C."/>
            <person name="Nakajima M."/>
            <person name="Narusaka M."/>
            <person name="Seki M."/>
            <person name="Sakurai T."/>
            <person name="Satou M."/>
            <person name="Tamse R."/>
            <person name="Vaysberg M."/>
            <person name="Wallender E.K."/>
            <person name="Wong C."/>
            <person name="Yamamura Y."/>
            <person name="Yuan S."/>
            <person name="Shinozaki K."/>
            <person name="Davis R.W."/>
            <person name="Theologis A."/>
            <person name="Ecker J.R."/>
        </authorList>
    </citation>
    <scope>NUCLEOTIDE SEQUENCE [LARGE SCALE MRNA]</scope>
    <source>
        <strain>cv. Columbia</strain>
    </source>
</reference>
<accession>Q9C8D6</accession>
<dbReference type="EMBL" id="AC026480">
    <property type="protein sequence ID" value="AAG51299.1"/>
    <property type="molecule type" value="Genomic_DNA"/>
</dbReference>
<dbReference type="EMBL" id="CP002684">
    <property type="protein sequence ID" value="AEE34462.1"/>
    <property type="molecule type" value="Genomic_DNA"/>
</dbReference>
<dbReference type="EMBL" id="AF380652">
    <property type="protein sequence ID" value="AAK55733.1"/>
    <property type="molecule type" value="mRNA"/>
</dbReference>
<dbReference type="EMBL" id="AY054154">
    <property type="protein sequence ID" value="AAL06815.1"/>
    <property type="molecule type" value="mRNA"/>
</dbReference>
<dbReference type="PIR" id="F96685">
    <property type="entry name" value="F96685"/>
</dbReference>
<dbReference type="RefSeq" id="NP_176784.1">
    <property type="nucleotide sequence ID" value="NM_105281.3"/>
</dbReference>
<dbReference type="SMR" id="Q9C8D6"/>
<dbReference type="FunCoup" id="Q9C8D6">
    <property type="interactions" value="2"/>
</dbReference>
<dbReference type="STRING" id="3702.Q9C8D6"/>
<dbReference type="PaxDb" id="3702-AT1G66100.1"/>
<dbReference type="ProteomicsDB" id="246461"/>
<dbReference type="EnsemblPlants" id="AT1G66100.1">
    <property type="protein sequence ID" value="AT1G66100.1"/>
    <property type="gene ID" value="AT1G66100"/>
</dbReference>
<dbReference type="GeneID" id="842924"/>
<dbReference type="Gramene" id="AT1G66100.1">
    <property type="protein sequence ID" value="AT1G66100.1"/>
    <property type="gene ID" value="AT1G66100"/>
</dbReference>
<dbReference type="KEGG" id="ath:AT1G66100"/>
<dbReference type="Araport" id="AT1G66100"/>
<dbReference type="TAIR" id="AT1G66100"/>
<dbReference type="eggNOG" id="ENOG502SUEZ">
    <property type="taxonomic scope" value="Eukaryota"/>
</dbReference>
<dbReference type="HOGENOM" id="CLU_132328_0_0_1"/>
<dbReference type="InParanoid" id="Q9C8D6"/>
<dbReference type="OMA" id="DANICCP"/>
<dbReference type="PhylomeDB" id="Q9C8D6"/>
<dbReference type="PRO" id="PR:Q9C8D6"/>
<dbReference type="Proteomes" id="UP000006548">
    <property type="component" value="Chromosome 1"/>
</dbReference>
<dbReference type="ExpressionAtlas" id="Q9C8D6">
    <property type="expression patterns" value="baseline and differential"/>
</dbReference>
<dbReference type="GO" id="GO:0005576">
    <property type="term" value="C:extracellular region"/>
    <property type="evidence" value="ECO:0007669"/>
    <property type="project" value="UniProtKB-SubCell"/>
</dbReference>
<dbReference type="GO" id="GO:0005634">
    <property type="term" value="C:nucleus"/>
    <property type="evidence" value="ECO:0007005"/>
    <property type="project" value="TAIR"/>
</dbReference>
<dbReference type="GO" id="GO:0090729">
    <property type="term" value="F:toxin activity"/>
    <property type="evidence" value="ECO:0007669"/>
    <property type="project" value="UniProtKB-KW"/>
</dbReference>
<dbReference type="GO" id="GO:0006952">
    <property type="term" value="P:defense response"/>
    <property type="evidence" value="ECO:0000250"/>
    <property type="project" value="TAIR"/>
</dbReference>
<dbReference type="FunFam" id="3.30.1350.10:FF:000001">
    <property type="entry name" value="Hellethionin-D"/>
    <property type="match status" value="1"/>
</dbReference>
<dbReference type="Gene3D" id="3.30.1350.10">
    <property type="entry name" value="Thionin-like"/>
    <property type="match status" value="1"/>
</dbReference>
<dbReference type="InterPro" id="IPR001010">
    <property type="entry name" value="Thionin"/>
</dbReference>
<dbReference type="InterPro" id="IPR036391">
    <property type="entry name" value="Thionin-like_sf"/>
</dbReference>
<dbReference type="PANTHER" id="PTHR33920">
    <property type="entry name" value="THIONIN-2.1-RELATED"/>
    <property type="match status" value="1"/>
</dbReference>
<dbReference type="PANTHER" id="PTHR33920:SF2">
    <property type="entry name" value="THIONIN-2.1-RELATED"/>
    <property type="match status" value="1"/>
</dbReference>
<dbReference type="Pfam" id="PF00321">
    <property type="entry name" value="Thionin"/>
    <property type="match status" value="1"/>
</dbReference>
<dbReference type="PRINTS" id="PR00287">
    <property type="entry name" value="THIONIN"/>
</dbReference>
<dbReference type="SUPFAM" id="SSF57429">
    <property type="entry name" value="Crambin-like"/>
    <property type="match status" value="1"/>
</dbReference>
<dbReference type="PROSITE" id="PS00271">
    <property type="entry name" value="THIONIN"/>
    <property type="match status" value="1"/>
</dbReference>